<feature type="signal peptide" evidence="1">
    <location>
        <begin position="1"/>
        <end position="25"/>
    </location>
</feature>
<feature type="chain" id="PRO_0000254646" description="MICOS complex subunit MIC26">
    <location>
        <begin position="26"/>
        <end position="198"/>
    </location>
</feature>
<feature type="transmembrane region" description="Helical" evidence="1">
    <location>
        <begin position="108"/>
        <end position="128"/>
    </location>
</feature>
<feature type="glycosylation site" description="O-linked (Xyl...) (chondroitin sulfate) serine" evidence="1">
    <location>
        <position position="162"/>
    </location>
</feature>
<feature type="splice variant" id="VSP_023333" description="In isoform 2." evidence="9">
    <original>ETYSQTKPKMQSLVQWGLDSYDYLQNAPPG</original>
    <variation>TAMTISKMHLLD</variation>
    <location>
        <begin position="80"/>
        <end position="109"/>
    </location>
</feature>
<protein>
    <recommendedName>
        <fullName evidence="7">MICOS complex subunit MIC26</fullName>
    </recommendedName>
    <alternativeName>
        <fullName>Apolipoprotein O</fullName>
    </alternativeName>
    <alternativeName>
        <fullName evidence="8">MICOS complex subunit MIC23</fullName>
    </alternativeName>
    <alternativeName>
        <fullName>Protein FAM121B</fullName>
    </alternativeName>
</protein>
<comment type="function">
    <text evidence="2 3 4">Component of the MICOS complex, a large protein complex of the mitochondrial inner membrane that plays crucial roles in the maintenance of crista junctions, inner membrane architecture, and formation of contact sites to the outer membrane. Plays a crucial role in crista junction formation and mitochondrial function (PubMed:25764979). Can promote cardiac lipotoxicity by enhancing mitochondrial respiration and fatty acid metabolism in cardiac myoblasts (PubMed:24743151). Promotes cholesterol efflux from macrophage cells. Detected in HDL, LDL and VLDL. Secreted by a microsomal triglyceride transfer protein (MTTP)-dependent mechanism, probably as a VLDL-associated protein that is subsequently transferred to HDL (PubMed:16956892).</text>
</comment>
<comment type="subunit">
    <text evidence="4 5 6 10">Component of the mitochondrial contact site and cristae organizing system (MICOS) complex, composed of at least MICOS10/MIC10, CHCHD3/MIC19, CHCHD6/MIC25, APOOL/MIC27, IMMT/MIC60, APOO/MIC23/MIC26 and MICOS13/MIC13. This complex was also known under the names MINOS or MitOS complex. he MICOS complex associates with mitochondrial outer membrane proteins SAMM50, MTX1 and MTX2 (together described as components of the mitochondrial outer membrane sorting assembly machinery (SAM) complex) and DNAJC11, mitochondrial inner membrane protein TMEM11 and with HSPA9 (PubMed:25764979, PubMed:25781180, PubMed:25997101). The MICOS and SAM complexes together with DNAJC11 are part of a large protein complex spanning both membranes termed the mitochondrial intermembrane space bridging (MIB) complex. Interacts with IMMT/MIC60 (PubMed:25764979, PubMed:25781180). Interacts with MICOS10/MIC10 and APOOL/MIC27 (PubMed:25764979).</text>
</comment>
<comment type="subcellular location">
    <subcellularLocation>
        <location evidence="4">Mitochondrion inner membrane</location>
        <topology evidence="1">Single-pass membrane protein</topology>
    </subcellularLocation>
    <subcellularLocation>
        <location evidence="2 4">Secreted</location>
    </subcellularLocation>
    <subcellularLocation>
        <location evidence="5">Mitochondrion</location>
    </subcellularLocation>
    <subcellularLocation>
        <location evidence="4">Golgi apparatus membrane</location>
    </subcellularLocation>
    <subcellularLocation>
        <location evidence="4">Endoplasmic reticulum membrane</location>
    </subcellularLocation>
    <text evidence="4">Exists in three distinct forms: a glycosylated and secreted form, an ER/Golgi-resident form and a non-glycosylated mitochondrial form.</text>
</comment>
<comment type="alternative products">
    <event type="alternative splicing"/>
    <isoform>
        <id>Q9BUR5-1</id>
        <name>1</name>
        <sequence type="displayed"/>
    </isoform>
    <isoform>
        <id>Q9BUR5-2</id>
        <name>2</name>
        <sequence type="described" ref="VSP_023333"/>
    </isoform>
</comment>
<comment type="tissue specificity">
    <text evidence="2">Expressed in all tissues examined. Up-regulated in diabetic heart.</text>
</comment>
<comment type="PTM">
    <text evidence="2 4">O-glycosylation; glycosaminoglycan of chondroitin-sulfate type.</text>
</comment>
<comment type="similarity">
    <text evidence="10">Belongs to the apolipoprotein O/MICOS complex subunit Mic27 family.</text>
</comment>
<reference key="1">
    <citation type="submission" date="1998-04" db="EMBL/GenBank/DDBJ databases">
        <authorList>
            <person name="Mao Y.M."/>
            <person name="Xie Y."/>
            <person name="Zheng Z.H."/>
        </authorList>
    </citation>
    <scope>NUCLEOTIDE SEQUENCE [LARGE SCALE MRNA] (ISOFORM 2)</scope>
    <source>
        <tissue>Fetal brain</tissue>
    </source>
</reference>
<reference key="2">
    <citation type="journal article" date="2003" name="Genome Res.">
        <title>The secreted protein discovery initiative (SPDI), a large-scale effort to identify novel human secreted and transmembrane proteins: a bioinformatics assessment.</title>
        <authorList>
            <person name="Clark H.F."/>
            <person name="Gurney A.L."/>
            <person name="Abaya E."/>
            <person name="Baker K."/>
            <person name="Baldwin D.T."/>
            <person name="Brush J."/>
            <person name="Chen J."/>
            <person name="Chow B."/>
            <person name="Chui C."/>
            <person name="Crowley C."/>
            <person name="Currell B."/>
            <person name="Deuel B."/>
            <person name="Dowd P."/>
            <person name="Eaton D."/>
            <person name="Foster J.S."/>
            <person name="Grimaldi C."/>
            <person name="Gu Q."/>
            <person name="Hass P.E."/>
            <person name="Heldens S."/>
            <person name="Huang A."/>
            <person name="Kim H.S."/>
            <person name="Klimowski L."/>
            <person name="Jin Y."/>
            <person name="Johnson S."/>
            <person name="Lee J."/>
            <person name="Lewis L."/>
            <person name="Liao D."/>
            <person name="Mark M.R."/>
            <person name="Robbie E."/>
            <person name="Sanchez C."/>
            <person name="Schoenfeld J."/>
            <person name="Seshagiri S."/>
            <person name="Simmons L."/>
            <person name="Singh J."/>
            <person name="Smith V."/>
            <person name="Stinson J."/>
            <person name="Vagts A."/>
            <person name="Vandlen R.L."/>
            <person name="Watanabe C."/>
            <person name="Wieand D."/>
            <person name="Woods K."/>
            <person name="Xie M.-H."/>
            <person name="Yansura D.G."/>
            <person name="Yi S."/>
            <person name="Yu G."/>
            <person name="Yuan J."/>
            <person name="Zhang M."/>
            <person name="Zhang Z."/>
            <person name="Goddard A.D."/>
            <person name="Wood W.I."/>
            <person name="Godowski P.J."/>
            <person name="Gray A.M."/>
        </authorList>
    </citation>
    <scope>NUCLEOTIDE SEQUENCE [LARGE SCALE MRNA] (ISOFORM 1)</scope>
</reference>
<reference key="3">
    <citation type="journal article" date="2004" name="Nat. Genet.">
        <title>Complete sequencing and characterization of 21,243 full-length human cDNAs.</title>
        <authorList>
            <person name="Ota T."/>
            <person name="Suzuki Y."/>
            <person name="Nishikawa T."/>
            <person name="Otsuki T."/>
            <person name="Sugiyama T."/>
            <person name="Irie R."/>
            <person name="Wakamatsu A."/>
            <person name="Hayashi K."/>
            <person name="Sato H."/>
            <person name="Nagai K."/>
            <person name="Kimura K."/>
            <person name="Makita H."/>
            <person name="Sekine M."/>
            <person name="Obayashi M."/>
            <person name="Nishi T."/>
            <person name="Shibahara T."/>
            <person name="Tanaka T."/>
            <person name="Ishii S."/>
            <person name="Yamamoto J."/>
            <person name="Saito K."/>
            <person name="Kawai Y."/>
            <person name="Isono Y."/>
            <person name="Nakamura Y."/>
            <person name="Nagahari K."/>
            <person name="Murakami K."/>
            <person name="Yasuda T."/>
            <person name="Iwayanagi T."/>
            <person name="Wagatsuma M."/>
            <person name="Shiratori A."/>
            <person name="Sudo H."/>
            <person name="Hosoiri T."/>
            <person name="Kaku Y."/>
            <person name="Kodaira H."/>
            <person name="Kondo H."/>
            <person name="Sugawara M."/>
            <person name="Takahashi M."/>
            <person name="Kanda K."/>
            <person name="Yokoi T."/>
            <person name="Furuya T."/>
            <person name="Kikkawa E."/>
            <person name="Omura Y."/>
            <person name="Abe K."/>
            <person name="Kamihara K."/>
            <person name="Katsuta N."/>
            <person name="Sato K."/>
            <person name="Tanikawa M."/>
            <person name="Yamazaki M."/>
            <person name="Ninomiya K."/>
            <person name="Ishibashi T."/>
            <person name="Yamashita H."/>
            <person name="Murakawa K."/>
            <person name="Fujimori K."/>
            <person name="Tanai H."/>
            <person name="Kimata M."/>
            <person name="Watanabe M."/>
            <person name="Hiraoka S."/>
            <person name="Chiba Y."/>
            <person name="Ishida S."/>
            <person name="Ono Y."/>
            <person name="Takiguchi S."/>
            <person name="Watanabe S."/>
            <person name="Yosida M."/>
            <person name="Hotuta T."/>
            <person name="Kusano J."/>
            <person name="Kanehori K."/>
            <person name="Takahashi-Fujii A."/>
            <person name="Hara H."/>
            <person name="Tanase T.-O."/>
            <person name="Nomura Y."/>
            <person name="Togiya S."/>
            <person name="Komai F."/>
            <person name="Hara R."/>
            <person name="Takeuchi K."/>
            <person name="Arita M."/>
            <person name="Imose N."/>
            <person name="Musashino K."/>
            <person name="Yuuki H."/>
            <person name="Oshima A."/>
            <person name="Sasaki N."/>
            <person name="Aotsuka S."/>
            <person name="Yoshikawa Y."/>
            <person name="Matsunawa H."/>
            <person name="Ichihara T."/>
            <person name="Shiohata N."/>
            <person name="Sano S."/>
            <person name="Moriya S."/>
            <person name="Momiyama H."/>
            <person name="Satoh N."/>
            <person name="Takami S."/>
            <person name="Terashima Y."/>
            <person name="Suzuki O."/>
            <person name="Nakagawa S."/>
            <person name="Senoh A."/>
            <person name="Mizoguchi H."/>
            <person name="Goto Y."/>
            <person name="Shimizu F."/>
            <person name="Wakebe H."/>
            <person name="Hishigaki H."/>
            <person name="Watanabe T."/>
            <person name="Sugiyama A."/>
            <person name="Takemoto M."/>
            <person name="Kawakami B."/>
            <person name="Yamazaki M."/>
            <person name="Watanabe K."/>
            <person name="Kumagai A."/>
            <person name="Itakura S."/>
            <person name="Fukuzumi Y."/>
            <person name="Fujimori Y."/>
            <person name="Komiyama M."/>
            <person name="Tashiro H."/>
            <person name="Tanigami A."/>
            <person name="Fujiwara T."/>
            <person name="Ono T."/>
            <person name="Yamada K."/>
            <person name="Fujii Y."/>
            <person name="Ozaki K."/>
            <person name="Hirao M."/>
            <person name="Ohmori Y."/>
            <person name="Kawabata A."/>
            <person name="Hikiji T."/>
            <person name="Kobatake N."/>
            <person name="Inagaki H."/>
            <person name="Ikema Y."/>
            <person name="Okamoto S."/>
            <person name="Okitani R."/>
            <person name="Kawakami T."/>
            <person name="Noguchi S."/>
            <person name="Itoh T."/>
            <person name="Shigeta K."/>
            <person name="Senba T."/>
            <person name="Matsumura K."/>
            <person name="Nakajima Y."/>
            <person name="Mizuno T."/>
            <person name="Morinaga M."/>
            <person name="Sasaki M."/>
            <person name="Togashi T."/>
            <person name="Oyama M."/>
            <person name="Hata H."/>
            <person name="Watanabe M."/>
            <person name="Komatsu T."/>
            <person name="Mizushima-Sugano J."/>
            <person name="Satoh T."/>
            <person name="Shirai Y."/>
            <person name="Takahashi Y."/>
            <person name="Nakagawa K."/>
            <person name="Okumura K."/>
            <person name="Nagase T."/>
            <person name="Nomura N."/>
            <person name="Kikuchi H."/>
            <person name="Masuho Y."/>
            <person name="Yamashita R."/>
            <person name="Nakai K."/>
            <person name="Yada T."/>
            <person name="Nakamura Y."/>
            <person name="Ohara O."/>
            <person name="Isogai T."/>
            <person name="Sugano S."/>
        </authorList>
    </citation>
    <scope>NUCLEOTIDE SEQUENCE [LARGE SCALE MRNA] (ISOFORM 1)</scope>
    <source>
        <tissue>Brain</tissue>
    </source>
</reference>
<reference key="4">
    <citation type="submission" date="2005-07" db="EMBL/GenBank/DDBJ databases">
        <authorList>
            <person name="Mural R.J."/>
            <person name="Istrail S."/>
            <person name="Sutton G.G."/>
            <person name="Florea L."/>
            <person name="Halpern A.L."/>
            <person name="Mobarry C.M."/>
            <person name="Lippert R."/>
            <person name="Walenz B."/>
            <person name="Shatkay H."/>
            <person name="Dew I."/>
            <person name="Miller J.R."/>
            <person name="Flanigan M.J."/>
            <person name="Edwards N.J."/>
            <person name="Bolanos R."/>
            <person name="Fasulo D."/>
            <person name="Halldorsson B.V."/>
            <person name="Hannenhalli S."/>
            <person name="Turner R."/>
            <person name="Yooseph S."/>
            <person name="Lu F."/>
            <person name="Nusskern D.R."/>
            <person name="Shue B.C."/>
            <person name="Zheng X.H."/>
            <person name="Zhong F."/>
            <person name="Delcher A.L."/>
            <person name="Huson D.H."/>
            <person name="Kravitz S.A."/>
            <person name="Mouchard L."/>
            <person name="Reinert K."/>
            <person name="Remington K.A."/>
            <person name="Clark A.G."/>
            <person name="Waterman M.S."/>
            <person name="Eichler E.E."/>
            <person name="Adams M.D."/>
            <person name="Hunkapiller M.W."/>
            <person name="Myers E.W."/>
            <person name="Venter J.C."/>
        </authorList>
    </citation>
    <scope>NUCLEOTIDE SEQUENCE [LARGE SCALE GENOMIC DNA]</scope>
</reference>
<reference key="5">
    <citation type="journal article" date="2004" name="Genome Res.">
        <title>The status, quality, and expansion of the NIH full-length cDNA project: the Mammalian Gene Collection (MGC).</title>
        <authorList>
            <consortium name="The MGC Project Team"/>
        </authorList>
    </citation>
    <scope>NUCLEOTIDE SEQUENCE [LARGE SCALE MRNA] (ISOFORM 1)</scope>
    <source>
        <tissue>Lung</tissue>
        <tissue>Skin</tissue>
        <tissue>Urinary bladder</tissue>
    </source>
</reference>
<reference key="6">
    <citation type="journal article" date="2006" name="J. Biol. Chem.">
        <title>ApoO, a novel apolipoprotein, is an original glycoprotein up-regulated by diabetes in human heart.</title>
        <authorList>
            <person name="Lamant M."/>
            <person name="Smih F."/>
            <person name="Harmancey R."/>
            <person name="Philip-Couderc P."/>
            <person name="Pathak A."/>
            <person name="Roncalli J."/>
            <person name="Galinier M."/>
            <person name="Collet X."/>
            <person name="Massabuau P."/>
            <person name="Senard J.-M."/>
            <person name="Rouet P."/>
        </authorList>
    </citation>
    <scope>FUNCTION</scope>
    <scope>SUBCELLULAR LOCATION</scope>
    <scope>TISSUE SPECIFICITY</scope>
    <scope>COVALENT LINKAGE WITH CHONDROITIN SULFATE</scope>
</reference>
<reference key="7">
    <citation type="journal article" date="2011" name="BMC Syst. Biol.">
        <title>Initial characterization of the human central proteome.</title>
        <authorList>
            <person name="Burkard T.R."/>
            <person name="Planyavsky M."/>
            <person name="Kaupe I."/>
            <person name="Breitwieser F.P."/>
            <person name="Buerckstuemmer T."/>
            <person name="Bennett K.L."/>
            <person name="Superti-Furga G."/>
            <person name="Colinge J."/>
        </authorList>
    </citation>
    <scope>IDENTIFICATION BY MASS SPECTROMETRY [LARGE SCALE ANALYSIS]</scope>
</reference>
<reference key="8">
    <citation type="journal article" date="2014" name="J. Clin. Invest.">
        <title>Apolipoprotein O is mitochondrial and promotes lipotoxicity in heart.</title>
        <authorList>
            <person name="Turkieh A."/>
            <person name="Caubere C."/>
            <person name="Barutaut M."/>
            <person name="Desmoulin F."/>
            <person name="Harmancey R."/>
            <person name="Galinier M."/>
            <person name="Berry M."/>
            <person name="Dambrin C."/>
            <person name="Polidori C."/>
            <person name="Casteilla L."/>
            <person name="Koukoui F."/>
            <person name="Rouet P."/>
            <person name="Smih F."/>
        </authorList>
    </citation>
    <scope>FUNCTION</scope>
</reference>
<reference key="9">
    <citation type="journal article" date="2015" name="Biochim. Biophys. Acta">
        <title>The non-glycosylated isoform of MIC26 is a constituent of the mammalian MICOS complex and promotes formation of crista junctions.</title>
        <authorList>
            <person name="Koob S."/>
            <person name="Barrera M."/>
            <person name="Anand R."/>
            <person name="Reichert A.S."/>
        </authorList>
    </citation>
    <scope>FUNCTION</scope>
    <scope>NOMENCLATURE</scope>
    <scope>IDENTIFICATION IN THE MICOS COMPLEX</scope>
    <scope>SUBCELLULAR LOCATION</scope>
    <scope>GLYCOSYLATION</scope>
    <scope>INTERACTION WITH MICOS10; APOOL AND IMMT</scope>
</reference>
<reference key="10">
    <citation type="journal article" date="2015" name="Elife">
        <title>QIL1 is a novel mitochondrial protein required for MICOS complex stability and cristae morphology.</title>
        <authorList>
            <person name="Guarani V."/>
            <person name="McNeill E.M."/>
            <person name="Paulo J.A."/>
            <person name="Huttlin E.L."/>
            <person name="Froehlich F."/>
            <person name="Gygi S.P."/>
            <person name="Van Vactor D."/>
            <person name="Harper J.W."/>
        </authorList>
    </citation>
    <scope>IDENTIFICATION IN THE MICOS COMPLEX</scope>
</reference>
<reference key="11">
    <citation type="journal article" date="2015" name="PLoS ONE">
        <title>Detailed analysis of the human mitochondrial contact site complex indicate a hierarchy of subunits.</title>
        <authorList>
            <person name="Ott C."/>
            <person name="Dorsch E."/>
            <person name="Fraunholz M."/>
            <person name="Straub S."/>
            <person name="Kozjak-Pavlovic V."/>
        </authorList>
    </citation>
    <scope>IDENTIFICATION IN THE MICOS COMPLEX</scope>
    <scope>NOMENCLATURE</scope>
    <scope>INTERACTION WITH IMMT</scope>
    <scope>SUBCELLULAR LOCATION</scope>
</reference>
<reference key="12">
    <citation type="journal article" date="2015" name="Proteomics">
        <title>N-terminome analysis of the human mitochondrial proteome.</title>
        <authorList>
            <person name="Vaca Jacome A.S."/>
            <person name="Rabilloud T."/>
            <person name="Schaeffer-Reiss C."/>
            <person name="Rompais M."/>
            <person name="Ayoub D."/>
            <person name="Lane L."/>
            <person name="Bairoch A."/>
            <person name="Van Dorsselaer A."/>
            <person name="Carapito C."/>
        </authorList>
    </citation>
    <scope>IDENTIFICATION BY MASS SPECTROMETRY [LARGE SCALE ANALYSIS]</scope>
</reference>
<evidence type="ECO:0000255" key="1"/>
<evidence type="ECO:0000269" key="2">
    <source>
    </source>
</evidence>
<evidence type="ECO:0000269" key="3">
    <source>
    </source>
</evidence>
<evidence type="ECO:0000269" key="4">
    <source>
    </source>
</evidence>
<evidence type="ECO:0000269" key="5">
    <source>
    </source>
</evidence>
<evidence type="ECO:0000269" key="6">
    <source>
    </source>
</evidence>
<evidence type="ECO:0000303" key="7">
    <source>
    </source>
</evidence>
<evidence type="ECO:0000303" key="8">
    <source>
    </source>
</evidence>
<evidence type="ECO:0000303" key="9">
    <source ref="1"/>
</evidence>
<evidence type="ECO:0000305" key="10"/>
<gene>
    <name type="primary">APOO</name>
    <name type="synonym">FAM121B</name>
    <name evidence="8" type="synonym">MIC23</name>
    <name evidence="7" type="synonym">MIC26</name>
    <name type="ORF">My025</name>
    <name type="ORF">UNQ1866/PRO4302</name>
</gene>
<organism>
    <name type="scientific">Homo sapiens</name>
    <name type="common">Human</name>
    <dbReference type="NCBI Taxonomy" id="9606"/>
    <lineage>
        <taxon>Eukaryota</taxon>
        <taxon>Metazoa</taxon>
        <taxon>Chordata</taxon>
        <taxon>Craniata</taxon>
        <taxon>Vertebrata</taxon>
        <taxon>Euteleostomi</taxon>
        <taxon>Mammalia</taxon>
        <taxon>Eutheria</taxon>
        <taxon>Euarchontoglires</taxon>
        <taxon>Primates</taxon>
        <taxon>Haplorrhini</taxon>
        <taxon>Catarrhini</taxon>
        <taxon>Hominidae</taxon>
        <taxon>Homo</taxon>
    </lineage>
</organism>
<accession>Q9BUR5</accession>
<accession>B2R4K9</accession>
<accession>Q9H3J9</accession>
<dbReference type="EMBL" id="AF061264">
    <property type="protein sequence ID" value="AAG43139.1"/>
    <property type="molecule type" value="mRNA"/>
</dbReference>
<dbReference type="EMBL" id="AY359114">
    <property type="protein sequence ID" value="AAQ89472.1"/>
    <property type="molecule type" value="mRNA"/>
</dbReference>
<dbReference type="EMBL" id="AK311865">
    <property type="protein sequence ID" value="BAG34806.1"/>
    <property type="molecule type" value="mRNA"/>
</dbReference>
<dbReference type="EMBL" id="CH471074">
    <property type="protein sequence ID" value="EAW99002.1"/>
    <property type="molecule type" value="Genomic_DNA"/>
</dbReference>
<dbReference type="EMBL" id="BC002333">
    <property type="protein sequence ID" value="AAH02333.1"/>
    <property type="molecule type" value="mRNA"/>
</dbReference>
<dbReference type="EMBL" id="BC010102">
    <property type="protein sequence ID" value="AAH10102.1"/>
    <property type="molecule type" value="mRNA"/>
</dbReference>
<dbReference type="EMBL" id="BC016814">
    <property type="protein sequence ID" value="AAH16814.1"/>
    <property type="molecule type" value="mRNA"/>
</dbReference>
<dbReference type="CCDS" id="CCDS14208.1">
    <molecule id="Q9BUR5-1"/>
</dbReference>
<dbReference type="RefSeq" id="NP_077027.1">
    <molecule id="Q9BUR5-1"/>
    <property type="nucleotide sequence ID" value="NM_024122.5"/>
</dbReference>
<dbReference type="RefSeq" id="XP_016885326.1">
    <molecule id="Q9BUR5-1"/>
    <property type="nucleotide sequence ID" value="XM_017029837.2"/>
</dbReference>
<dbReference type="RefSeq" id="XP_054183835.1">
    <molecule id="Q9BUR5-1"/>
    <property type="nucleotide sequence ID" value="XM_054327860.1"/>
</dbReference>
<dbReference type="BioGRID" id="122556">
    <property type="interactions" value="140"/>
</dbReference>
<dbReference type="ComplexPortal" id="CPX-6141">
    <property type="entry name" value="MICOS mitochondrial contact site and cristae organizing system complex"/>
</dbReference>
<dbReference type="CORUM" id="Q9BUR5"/>
<dbReference type="FunCoup" id="Q9BUR5">
    <property type="interactions" value="630"/>
</dbReference>
<dbReference type="IntAct" id="Q9BUR5">
    <property type="interactions" value="13"/>
</dbReference>
<dbReference type="MINT" id="Q9BUR5"/>
<dbReference type="STRING" id="9606.ENSP00000368528"/>
<dbReference type="TCDB" id="8.A.156.3.1">
    <property type="family name" value="the micos complex (micos-c) family"/>
</dbReference>
<dbReference type="CarbonylDB" id="Q9BUR5"/>
<dbReference type="GlyCosmos" id="Q9BUR5">
    <property type="glycosylation" value="1 site, No reported glycans"/>
</dbReference>
<dbReference type="GlyGen" id="Q9BUR5">
    <property type="glycosylation" value="1 site"/>
</dbReference>
<dbReference type="iPTMnet" id="Q9BUR5"/>
<dbReference type="PhosphoSitePlus" id="Q9BUR5"/>
<dbReference type="SwissPalm" id="Q9BUR5"/>
<dbReference type="BioMuta" id="APOO"/>
<dbReference type="DMDM" id="74733244"/>
<dbReference type="jPOST" id="Q9BUR5"/>
<dbReference type="MassIVE" id="Q9BUR5"/>
<dbReference type="PaxDb" id="9606-ENSP00000368528"/>
<dbReference type="PeptideAtlas" id="Q9BUR5"/>
<dbReference type="ProteomicsDB" id="79123">
    <molecule id="Q9BUR5-1"/>
</dbReference>
<dbReference type="ProteomicsDB" id="79124">
    <molecule id="Q9BUR5-2"/>
</dbReference>
<dbReference type="Pumba" id="Q9BUR5"/>
<dbReference type="TopDownProteomics" id="Q9BUR5-1">
    <molecule id="Q9BUR5-1"/>
</dbReference>
<dbReference type="TopDownProteomics" id="Q9BUR5-2">
    <molecule id="Q9BUR5-2"/>
</dbReference>
<dbReference type="Antibodypedia" id="564">
    <property type="antibodies" value="176 antibodies from 27 providers"/>
</dbReference>
<dbReference type="DNASU" id="79135"/>
<dbReference type="Ensembl" id="ENST00000379226.9">
    <molecule id="Q9BUR5-1"/>
    <property type="protein sequence ID" value="ENSP00000368528.4"/>
    <property type="gene ID" value="ENSG00000184831.14"/>
</dbReference>
<dbReference type="GeneID" id="79135"/>
<dbReference type="KEGG" id="hsa:79135"/>
<dbReference type="MANE-Select" id="ENST00000379226.9">
    <property type="protein sequence ID" value="ENSP00000368528.4"/>
    <property type="RefSeq nucleotide sequence ID" value="NM_024122.5"/>
    <property type="RefSeq protein sequence ID" value="NP_077027.1"/>
</dbReference>
<dbReference type="UCSC" id="uc004dax.4">
    <molecule id="Q9BUR5-1"/>
    <property type="organism name" value="human"/>
</dbReference>
<dbReference type="AGR" id="HGNC:28727"/>
<dbReference type="CTD" id="79135"/>
<dbReference type="DisGeNET" id="79135"/>
<dbReference type="GeneCards" id="APOO"/>
<dbReference type="HGNC" id="HGNC:28727">
    <property type="gene designation" value="APOO"/>
</dbReference>
<dbReference type="HPA" id="ENSG00000184831">
    <property type="expression patterns" value="Tissue enhanced (choroid)"/>
</dbReference>
<dbReference type="MalaCards" id="APOO"/>
<dbReference type="MIM" id="300753">
    <property type="type" value="gene"/>
</dbReference>
<dbReference type="neXtProt" id="NX_Q9BUR5"/>
<dbReference type="OpenTargets" id="ENSG00000184831"/>
<dbReference type="PharmGKB" id="PA162376709"/>
<dbReference type="VEuPathDB" id="HostDB:ENSG00000184831"/>
<dbReference type="eggNOG" id="KOG4798">
    <property type="taxonomic scope" value="Eukaryota"/>
</dbReference>
<dbReference type="GeneTree" id="ENSGT00530000063666"/>
<dbReference type="InParanoid" id="Q9BUR5"/>
<dbReference type="OMA" id="KVYASQK"/>
<dbReference type="OrthoDB" id="9421762at2759"/>
<dbReference type="PAN-GO" id="Q9BUR5">
    <property type="GO annotations" value="2 GO annotations based on evolutionary models"/>
</dbReference>
<dbReference type="PhylomeDB" id="Q9BUR5"/>
<dbReference type="TreeFam" id="TF315313"/>
<dbReference type="PathwayCommons" id="Q9BUR5"/>
<dbReference type="Reactome" id="R-HSA-8949613">
    <property type="pathway name" value="Cristae formation"/>
</dbReference>
<dbReference type="SignaLink" id="Q9BUR5"/>
<dbReference type="BioGRID-ORCS" id="79135">
    <property type="hits" value="11 hits in 778 CRISPR screens"/>
</dbReference>
<dbReference type="ChiTaRS" id="APOO">
    <property type="organism name" value="human"/>
</dbReference>
<dbReference type="GeneWiki" id="Apolipoprotein_O"/>
<dbReference type="GenomeRNAi" id="79135"/>
<dbReference type="Pharos" id="Q9BUR5">
    <property type="development level" value="Tbio"/>
</dbReference>
<dbReference type="PRO" id="PR:Q9BUR5"/>
<dbReference type="Proteomes" id="UP000005640">
    <property type="component" value="Chromosome X"/>
</dbReference>
<dbReference type="RNAct" id="Q9BUR5">
    <property type="molecule type" value="protein"/>
</dbReference>
<dbReference type="Bgee" id="ENSG00000184831">
    <property type="expression patterns" value="Expressed in decidua and 188 other cell types or tissues"/>
</dbReference>
<dbReference type="ExpressionAtlas" id="Q9BUR5">
    <property type="expression patterns" value="baseline and differential"/>
</dbReference>
<dbReference type="GO" id="GO:0005829">
    <property type="term" value="C:cytosol"/>
    <property type="evidence" value="ECO:0000314"/>
    <property type="project" value="HPA"/>
</dbReference>
<dbReference type="GO" id="GO:0005789">
    <property type="term" value="C:endoplasmic reticulum membrane"/>
    <property type="evidence" value="ECO:0000314"/>
    <property type="project" value="UniProtKB"/>
</dbReference>
<dbReference type="GO" id="GO:0005576">
    <property type="term" value="C:extracellular region"/>
    <property type="evidence" value="ECO:0000314"/>
    <property type="project" value="UniProtKB"/>
</dbReference>
<dbReference type="GO" id="GO:0005615">
    <property type="term" value="C:extracellular space"/>
    <property type="evidence" value="ECO:0000250"/>
    <property type="project" value="BHF-UCL"/>
</dbReference>
<dbReference type="GO" id="GO:0000139">
    <property type="term" value="C:Golgi membrane"/>
    <property type="evidence" value="ECO:0000314"/>
    <property type="project" value="UniProtKB"/>
</dbReference>
<dbReference type="GO" id="GO:0034364">
    <property type="term" value="C:high-density lipoprotein particle"/>
    <property type="evidence" value="ECO:0007669"/>
    <property type="project" value="UniProtKB-KW"/>
</dbReference>
<dbReference type="GO" id="GO:0034362">
    <property type="term" value="C:low-density lipoprotein particle"/>
    <property type="evidence" value="ECO:0007669"/>
    <property type="project" value="UniProtKB-KW"/>
</dbReference>
<dbReference type="GO" id="GO:0140275">
    <property type="term" value="C:MIB complex"/>
    <property type="evidence" value="ECO:0007005"/>
    <property type="project" value="UniProtKB"/>
</dbReference>
<dbReference type="GO" id="GO:0061617">
    <property type="term" value="C:MICOS complex"/>
    <property type="evidence" value="ECO:0000314"/>
    <property type="project" value="UniProtKB"/>
</dbReference>
<dbReference type="GO" id="GO:0044284">
    <property type="term" value="C:mitochondrial crista junction"/>
    <property type="evidence" value="ECO:0000303"/>
    <property type="project" value="ComplexPortal"/>
</dbReference>
<dbReference type="GO" id="GO:0005743">
    <property type="term" value="C:mitochondrial inner membrane"/>
    <property type="evidence" value="ECO:0000314"/>
    <property type="project" value="UniProtKB"/>
</dbReference>
<dbReference type="GO" id="GO:0005739">
    <property type="term" value="C:mitochondrion"/>
    <property type="evidence" value="ECO:0000314"/>
    <property type="project" value="HPA"/>
</dbReference>
<dbReference type="GO" id="GO:0001401">
    <property type="term" value="C:SAM complex"/>
    <property type="evidence" value="ECO:0007005"/>
    <property type="project" value="UniProtKB"/>
</dbReference>
<dbReference type="GO" id="GO:0034361">
    <property type="term" value="C:very-low-density lipoprotein particle"/>
    <property type="evidence" value="ECO:0007669"/>
    <property type="project" value="UniProtKB-KW"/>
</dbReference>
<dbReference type="GO" id="GO:0042407">
    <property type="term" value="P:cristae formation"/>
    <property type="evidence" value="ECO:0000315"/>
    <property type="project" value="UniProtKB"/>
</dbReference>
<dbReference type="GO" id="GO:0007007">
    <property type="term" value="P:inner mitochondrial membrane organization"/>
    <property type="evidence" value="ECO:0000305"/>
    <property type="project" value="UniProtKB"/>
</dbReference>
<dbReference type="GO" id="GO:0006869">
    <property type="term" value="P:lipid transport"/>
    <property type="evidence" value="ECO:0007669"/>
    <property type="project" value="UniProtKB-KW"/>
</dbReference>
<dbReference type="InterPro" id="IPR019166">
    <property type="entry name" value="MIC26/MIC27"/>
</dbReference>
<dbReference type="InterPro" id="IPR033182">
    <property type="entry name" value="MIC26/MIC27_animal"/>
</dbReference>
<dbReference type="PANTHER" id="PTHR14564">
    <property type="entry name" value="MICOS COMPLEX SUBUNIT MIC26 / MIC27 FAMILY MEMBER"/>
    <property type="match status" value="1"/>
</dbReference>
<dbReference type="Pfam" id="PF09769">
    <property type="entry name" value="ApoO"/>
    <property type="match status" value="1"/>
</dbReference>
<name>MIC26_HUMAN</name>
<sequence>MFKVIQRSVGPASLSLLTFKVYAAPKKDSPPKNSVKVDELSLYSVPEGQSKYVEEARSQLEESISQLRHYCEPYTTWCQETYSQTKPKMQSLVQWGLDSYDYLQNAPPGFFPRLGVIGFAGLIGLLLARGSKIKKLVYPPGFMGLAASLYYPQQAIVFAQVSGERLYDWGLRGYIVIEDLWKENFQKPGNVKNSPGTK</sequence>
<keyword id="KW-0025">Alternative splicing</keyword>
<keyword id="KW-0256">Endoplasmic reticulum</keyword>
<keyword id="KW-0325">Glycoprotein</keyword>
<keyword id="KW-0333">Golgi apparatus</keyword>
<keyword id="KW-0345">HDL</keyword>
<keyword id="KW-0427">LDL</keyword>
<keyword id="KW-0445">Lipid transport</keyword>
<keyword id="KW-0472">Membrane</keyword>
<keyword id="KW-0496">Mitochondrion</keyword>
<keyword id="KW-0999">Mitochondrion inner membrane</keyword>
<keyword id="KW-0654">Proteoglycan</keyword>
<keyword id="KW-1267">Proteomics identification</keyword>
<keyword id="KW-1185">Reference proteome</keyword>
<keyword id="KW-0964">Secreted</keyword>
<keyword id="KW-0732">Signal</keyword>
<keyword id="KW-0812">Transmembrane</keyword>
<keyword id="KW-1133">Transmembrane helix</keyword>
<keyword id="KW-0813">Transport</keyword>
<keyword id="KW-0850">VLDL</keyword>
<proteinExistence type="evidence at protein level"/>